<name>RL27_PIG</name>
<dbReference type="EMBL" id="DQ629167">
    <property type="protein sequence ID" value="ABK55651.1"/>
    <property type="molecule type" value="mRNA"/>
</dbReference>
<dbReference type="RefSeq" id="NP_001090948.1">
    <property type="nucleotide sequence ID" value="NM_001097479.1"/>
</dbReference>
<dbReference type="PDB" id="3J7O">
    <property type="method" value="EM"/>
    <property type="resolution" value="3.50 A"/>
    <property type="chains" value="Z=1-136"/>
</dbReference>
<dbReference type="PDB" id="3J7P">
    <property type="method" value="EM"/>
    <property type="resolution" value="3.50 A"/>
    <property type="chains" value="Z=1-136"/>
</dbReference>
<dbReference type="PDB" id="3J7Q">
    <property type="method" value="EM"/>
    <property type="resolution" value="3.50 A"/>
    <property type="chains" value="Z=1-136"/>
</dbReference>
<dbReference type="PDB" id="3J7R">
    <property type="method" value="EM"/>
    <property type="resolution" value="3.90 A"/>
    <property type="chains" value="Z=1-136"/>
</dbReference>
<dbReference type="PDBsum" id="3J7O"/>
<dbReference type="PDBsum" id="3J7P"/>
<dbReference type="PDBsum" id="3J7Q"/>
<dbReference type="PDBsum" id="3J7R"/>
<dbReference type="SMR" id="A1XQU5"/>
<dbReference type="FunCoup" id="A1XQU5">
    <property type="interactions" value="2741"/>
</dbReference>
<dbReference type="STRING" id="9823.ENSSSCP00000024028"/>
<dbReference type="PaxDb" id="9823-ENSSSCP00000024028"/>
<dbReference type="PeptideAtlas" id="A1XQU5"/>
<dbReference type="Ensembl" id="ENSSSCT00000026116.4">
    <property type="protein sequence ID" value="ENSSSCP00000024028.2"/>
    <property type="gene ID" value="ENSSSCG00000025507.4"/>
</dbReference>
<dbReference type="Ensembl" id="ENSSSCT00025071575.1">
    <property type="protein sequence ID" value="ENSSSCP00025031004.1"/>
    <property type="gene ID" value="ENSSSCG00025052229.1"/>
</dbReference>
<dbReference type="Ensembl" id="ENSSSCT00035013194.1">
    <property type="protein sequence ID" value="ENSSSCP00035004457.1"/>
    <property type="gene ID" value="ENSSSCG00035010532.1"/>
</dbReference>
<dbReference type="Ensembl" id="ENSSSCT00045013229.1">
    <property type="protein sequence ID" value="ENSSSCP00045009127.1"/>
    <property type="gene ID" value="ENSSSCG00045007870.1"/>
</dbReference>
<dbReference type="Ensembl" id="ENSSSCT00045013263.1">
    <property type="protein sequence ID" value="ENSSSCP00045009149.1"/>
    <property type="gene ID" value="ENSSSCG00045007870.1"/>
</dbReference>
<dbReference type="Ensembl" id="ENSSSCT00050080380.1">
    <property type="protein sequence ID" value="ENSSSCP00050034527.1"/>
    <property type="gene ID" value="ENSSSCG00050058986.1"/>
</dbReference>
<dbReference type="Ensembl" id="ENSSSCT00055047402.1">
    <property type="protein sequence ID" value="ENSSSCP00055037831.1"/>
    <property type="gene ID" value="ENSSSCG00055024077.1"/>
</dbReference>
<dbReference type="Ensembl" id="ENSSSCT00065003723.1">
    <property type="protein sequence ID" value="ENSSSCP00065001406.1"/>
    <property type="gene ID" value="ENSSSCG00065002857.1"/>
</dbReference>
<dbReference type="Ensembl" id="ENSSSCT00070023999.1">
    <property type="protein sequence ID" value="ENSSSCP00070019849.1"/>
    <property type="gene ID" value="ENSSSCG00070012287.1"/>
</dbReference>
<dbReference type="Ensembl" id="ENSSSCT00070024009.1">
    <property type="protein sequence ID" value="ENSSSCP00070019859.1"/>
    <property type="gene ID" value="ENSSSCG00070012287.1"/>
</dbReference>
<dbReference type="Ensembl" id="ENSSSCT00085012570">
    <property type="protein sequence ID" value="ENSSSCP00085009171"/>
    <property type="gene ID" value="ENSSSCG00085006634"/>
</dbReference>
<dbReference type="Ensembl" id="ENSSSCT00090009368">
    <property type="protein sequence ID" value="ENSSSCP00090005690"/>
    <property type="gene ID" value="ENSSSCG00090005349"/>
</dbReference>
<dbReference type="Ensembl" id="ENSSSCT00105049700">
    <property type="protein sequence ID" value="ENSSSCP00105035003"/>
    <property type="gene ID" value="ENSSSCG00105026164"/>
</dbReference>
<dbReference type="Ensembl" id="ENSSSCT00110040401">
    <property type="protein sequence ID" value="ENSSSCP00110028164"/>
    <property type="gene ID" value="ENSSSCG00110020958"/>
</dbReference>
<dbReference type="Ensembl" id="ENSSSCT00115038245">
    <property type="protein sequence ID" value="ENSSSCP00115036120"/>
    <property type="gene ID" value="ENSSSCG00115021585"/>
</dbReference>
<dbReference type="Ensembl" id="ENSSSCT00130012260">
    <property type="protein sequence ID" value="ENSSSCP00130008031"/>
    <property type="gene ID" value="ENSSSCG00130006685"/>
</dbReference>
<dbReference type="GeneID" id="100037995"/>
<dbReference type="KEGG" id="ssc:100037995"/>
<dbReference type="CTD" id="6155"/>
<dbReference type="VGNC" id="VGNC:99035">
    <property type="gene designation" value="RPL27"/>
</dbReference>
<dbReference type="eggNOG" id="KOG3418">
    <property type="taxonomic scope" value="Eukaryota"/>
</dbReference>
<dbReference type="GeneTree" id="ENSGT00390000010721"/>
<dbReference type="HOGENOM" id="CLU_067359_0_1_1"/>
<dbReference type="InParanoid" id="A1XQU5"/>
<dbReference type="OMA" id="NQWFFTK"/>
<dbReference type="OrthoDB" id="2365484at2759"/>
<dbReference type="Reactome" id="R-SSC-156827">
    <property type="pathway name" value="L13a-mediated translational silencing of Ceruloplasmin expression"/>
</dbReference>
<dbReference type="Reactome" id="R-SSC-1799339">
    <property type="pathway name" value="SRP-dependent cotranslational protein targeting to membrane"/>
</dbReference>
<dbReference type="Reactome" id="R-SSC-6791226">
    <property type="pathway name" value="Major pathway of rRNA processing in the nucleolus and cytosol"/>
</dbReference>
<dbReference type="Reactome" id="R-SSC-72689">
    <property type="pathway name" value="Formation of a pool of free 40S subunits"/>
</dbReference>
<dbReference type="Reactome" id="R-SSC-72706">
    <property type="pathway name" value="GTP hydrolysis and joining of the 60S ribosomal subunit"/>
</dbReference>
<dbReference type="Reactome" id="R-SSC-975956">
    <property type="pathway name" value="Nonsense Mediated Decay (NMD) independent of the Exon Junction Complex (EJC)"/>
</dbReference>
<dbReference type="Reactome" id="R-SSC-975957">
    <property type="pathway name" value="Nonsense Mediated Decay (NMD) enhanced by the Exon Junction Complex (EJC)"/>
</dbReference>
<dbReference type="Proteomes" id="UP000008227">
    <property type="component" value="Chromosome 12"/>
</dbReference>
<dbReference type="Proteomes" id="UP000314985">
    <property type="component" value="Chromosome 12"/>
</dbReference>
<dbReference type="Proteomes" id="UP000694570">
    <property type="component" value="Unplaced"/>
</dbReference>
<dbReference type="Proteomes" id="UP000694571">
    <property type="component" value="Unplaced"/>
</dbReference>
<dbReference type="Proteomes" id="UP000694720">
    <property type="component" value="Unplaced"/>
</dbReference>
<dbReference type="Proteomes" id="UP000694722">
    <property type="component" value="Unplaced"/>
</dbReference>
<dbReference type="Proteomes" id="UP000694723">
    <property type="component" value="Unplaced"/>
</dbReference>
<dbReference type="Proteomes" id="UP000694724">
    <property type="component" value="Unplaced"/>
</dbReference>
<dbReference type="Proteomes" id="UP000694725">
    <property type="component" value="Unplaced"/>
</dbReference>
<dbReference type="Proteomes" id="UP000694726">
    <property type="component" value="Unplaced"/>
</dbReference>
<dbReference type="Proteomes" id="UP000694727">
    <property type="component" value="Unplaced"/>
</dbReference>
<dbReference type="Proteomes" id="UP000694728">
    <property type="component" value="Unplaced"/>
</dbReference>
<dbReference type="Bgee" id="ENSSSCG00000025507">
    <property type="expression patterns" value="Expressed in longissimus lumborum muscle and 43 other cell types or tissues"/>
</dbReference>
<dbReference type="ExpressionAtlas" id="A1XQU5">
    <property type="expression patterns" value="baseline and differential"/>
</dbReference>
<dbReference type="GO" id="GO:0098556">
    <property type="term" value="C:cytoplasmic side of rough endoplasmic reticulum membrane"/>
    <property type="evidence" value="ECO:0000314"/>
    <property type="project" value="UniProtKB"/>
</dbReference>
<dbReference type="GO" id="GO:0022625">
    <property type="term" value="C:cytosolic large ribosomal subunit"/>
    <property type="evidence" value="ECO:0000318"/>
    <property type="project" value="GO_Central"/>
</dbReference>
<dbReference type="GO" id="GO:0015934">
    <property type="term" value="C:large ribosomal subunit"/>
    <property type="evidence" value="ECO:0000314"/>
    <property type="project" value="UniProtKB"/>
</dbReference>
<dbReference type="GO" id="GO:0003735">
    <property type="term" value="F:structural constituent of ribosome"/>
    <property type="evidence" value="ECO:0000318"/>
    <property type="project" value="GO_Central"/>
</dbReference>
<dbReference type="GO" id="GO:0006364">
    <property type="term" value="P:rRNA processing"/>
    <property type="evidence" value="ECO:0000250"/>
    <property type="project" value="UniProtKB"/>
</dbReference>
<dbReference type="GO" id="GO:0006412">
    <property type="term" value="P:translation"/>
    <property type="evidence" value="ECO:0007669"/>
    <property type="project" value="InterPro"/>
</dbReference>
<dbReference type="CDD" id="cd06090">
    <property type="entry name" value="KOW_RPL27"/>
    <property type="match status" value="1"/>
</dbReference>
<dbReference type="FunFam" id="2.30.30.770:FF:000001">
    <property type="entry name" value="60S ribosomal protein L27"/>
    <property type="match status" value="1"/>
</dbReference>
<dbReference type="Gene3D" id="2.30.30.770">
    <property type="match status" value="1"/>
</dbReference>
<dbReference type="InterPro" id="IPR005824">
    <property type="entry name" value="KOW"/>
</dbReference>
<dbReference type="InterPro" id="IPR001141">
    <property type="entry name" value="Ribosomal_eL27"/>
</dbReference>
<dbReference type="InterPro" id="IPR018262">
    <property type="entry name" value="Ribosomal_eL27_CS"/>
</dbReference>
<dbReference type="InterPro" id="IPR041991">
    <property type="entry name" value="Ribosomal_eL27_KOW"/>
</dbReference>
<dbReference type="InterPro" id="IPR038655">
    <property type="entry name" value="Ribosomal_eL27_sf"/>
</dbReference>
<dbReference type="InterPro" id="IPR008991">
    <property type="entry name" value="Translation_prot_SH3-like_sf"/>
</dbReference>
<dbReference type="PANTHER" id="PTHR10497">
    <property type="entry name" value="60S RIBOSOMAL PROTEIN L27"/>
    <property type="match status" value="1"/>
</dbReference>
<dbReference type="Pfam" id="PF00467">
    <property type="entry name" value="KOW"/>
    <property type="match status" value="1"/>
</dbReference>
<dbReference type="Pfam" id="PF01777">
    <property type="entry name" value="Ribosomal_L27e"/>
    <property type="match status" value="1"/>
</dbReference>
<dbReference type="SMART" id="SM00739">
    <property type="entry name" value="KOW"/>
    <property type="match status" value="1"/>
</dbReference>
<dbReference type="SUPFAM" id="SSF50104">
    <property type="entry name" value="Translation proteins SH3-like domain"/>
    <property type="match status" value="1"/>
</dbReference>
<dbReference type="PROSITE" id="PS01107">
    <property type="entry name" value="RIBOSOMAL_L27E"/>
    <property type="match status" value="1"/>
</dbReference>
<comment type="function">
    <text evidence="1 2">Component of the large ribosomal subunit (PubMed:24930395). Required for proper rRNA processing and maturation of 28S and 5.8S rRNAs (By similarity).</text>
</comment>
<comment type="subunit">
    <text evidence="1 2">Component of the large ribosomal subunit (PubMed:24930395). Interacts with RRP1B (By similarity). Component of the large ribosomal subunit. Interacts with RRP1B. Interacts with DHX33 (By similarity).</text>
</comment>
<comment type="subcellular location">
    <subcellularLocation>
        <location evidence="1">Cytoplasm</location>
        <location evidence="1">Cytosol</location>
    </subcellularLocation>
    <subcellularLocation>
        <location evidence="2">Cytoplasm</location>
    </subcellularLocation>
    <subcellularLocation>
        <location evidence="2">Rough endoplasmic reticulum</location>
    </subcellularLocation>
    <text evidence="1 2">Detected on cytosolic polysomes (By similarity). Detected in ribosomes that are associated with the rough endoplasmic reticulum (PubMed:24930395).</text>
</comment>
<comment type="similarity">
    <text evidence="3">Belongs to the eukaryotic ribosomal protein eL27 family.</text>
</comment>
<feature type="chain" id="PRO_0000296385" description="Large ribosomal subunit protein eL27">
    <location>
        <begin position="1"/>
        <end position="136"/>
    </location>
</feature>
<feature type="domain" description="KOW">
    <location>
        <begin position="5"/>
        <end position="40"/>
    </location>
</feature>
<feature type="modified residue" description="N6-acetyllysine" evidence="1">
    <location>
        <position position="27"/>
    </location>
</feature>
<feature type="modified residue" description="N6-acetyllysine" evidence="1">
    <location>
        <position position="93"/>
    </location>
</feature>
<gene>
    <name type="primary">RPL27</name>
</gene>
<sequence length="136" mass="15798">MGKFMKPGKVVLVLAGRYSGRKAVIVKNIDDGTSDRPYSHALVAGIDRYPRKVTAAMGKKKIAKRSKIKSFVKVYNYNHLMPTRYSVDIPLDKTVVNKDVFRDPALKRKARREAKVKFEERYKTGKNKWFFQKLRF</sequence>
<protein>
    <recommendedName>
        <fullName evidence="3">Large ribosomal subunit protein eL27</fullName>
    </recommendedName>
    <alternativeName>
        <fullName>60S ribosomal protein L27</fullName>
    </alternativeName>
</protein>
<reference key="1">
    <citation type="submission" date="2006-05" db="EMBL/GenBank/DDBJ databases">
        <title>Generation and analysis of cDNA sequences derived from a porcine skeletal muscle library.</title>
        <authorList>
            <person name="Cai G."/>
            <person name="Chen Y."/>
            <person name="Wang C."/>
            <person name="Li J."/>
            <person name="Peng G."/>
            <person name="Zhang H."/>
        </authorList>
    </citation>
    <scope>NUCLEOTIDE SEQUENCE [LARGE SCALE MRNA]</scope>
    <source>
        <tissue>Longissimus dorsi muscle</tissue>
    </source>
</reference>
<reference evidence="4 5 6 7" key="2">
    <citation type="journal article" date="2014" name="Cell">
        <title>Structure of the mammalian ribosome-Sec61 complex to 3.4 A resolution.</title>
        <authorList>
            <person name="Voorhees R.M."/>
            <person name="Fernandez I.S."/>
            <person name="Scheres S.H."/>
            <person name="Hegde R.S."/>
        </authorList>
    </citation>
    <scope>STRUCTURE BY ELECTRON MICROSCOPY (3.50 ANGSTROMS)</scope>
    <scope>FUNCTION</scope>
    <scope>SUBCELLULAR LOCATION</scope>
    <scope>SUBUNIT</scope>
</reference>
<accession>A1XQU5</accession>
<proteinExistence type="evidence at protein level"/>
<organism>
    <name type="scientific">Sus scrofa</name>
    <name type="common">Pig</name>
    <dbReference type="NCBI Taxonomy" id="9823"/>
    <lineage>
        <taxon>Eukaryota</taxon>
        <taxon>Metazoa</taxon>
        <taxon>Chordata</taxon>
        <taxon>Craniata</taxon>
        <taxon>Vertebrata</taxon>
        <taxon>Euteleostomi</taxon>
        <taxon>Mammalia</taxon>
        <taxon>Eutheria</taxon>
        <taxon>Laurasiatheria</taxon>
        <taxon>Artiodactyla</taxon>
        <taxon>Suina</taxon>
        <taxon>Suidae</taxon>
        <taxon>Sus</taxon>
    </lineage>
</organism>
<keyword id="KW-0002">3D-structure</keyword>
<keyword id="KW-0007">Acetylation</keyword>
<keyword id="KW-0963">Cytoplasm</keyword>
<keyword id="KW-0256">Endoplasmic reticulum</keyword>
<keyword id="KW-1185">Reference proteome</keyword>
<keyword id="KW-0687">Ribonucleoprotein</keyword>
<keyword id="KW-0689">Ribosomal protein</keyword>
<evidence type="ECO:0000250" key="1">
    <source>
        <dbReference type="UniProtKB" id="P61353"/>
    </source>
</evidence>
<evidence type="ECO:0000269" key="2">
    <source>
    </source>
</evidence>
<evidence type="ECO:0000305" key="3"/>
<evidence type="ECO:0007744" key="4">
    <source>
        <dbReference type="PDB" id="3J7O"/>
    </source>
</evidence>
<evidence type="ECO:0007744" key="5">
    <source>
        <dbReference type="PDB" id="3J7P"/>
    </source>
</evidence>
<evidence type="ECO:0007744" key="6">
    <source>
        <dbReference type="PDB" id="3J7Q"/>
    </source>
</evidence>
<evidence type="ECO:0007744" key="7">
    <source>
        <dbReference type="PDB" id="3J7R"/>
    </source>
</evidence>